<protein>
    <recommendedName>
        <fullName evidence="3">Ectoine/hydroxyectoine transporter</fullName>
    </recommendedName>
</protein>
<proteinExistence type="evidence at protein level"/>
<reference key="1">
    <citation type="journal article" date="2011" name="J. Bacteriol.">
        <title>Ectoine and hydroxyectoine as protectants against osmotic and cold stress: uptake through the SigB-controlled betaine-choline-carnitine transporter-type carrier EctT from Virgibacillus pantothenticus.</title>
        <authorList>
            <person name="Kuhlmann A.U."/>
            <person name="Hoffmann T."/>
            <person name="Bursy J."/>
            <person name="Jebbar M."/>
            <person name="Bremer E."/>
        </authorList>
    </citation>
    <scope>NUCLEOTIDE SEQUENCE [GENOMIC DNA]</scope>
    <scope>FUNCTION</scope>
    <scope>BIOPHYSICOCHEMICAL PROPERTIES</scope>
    <scope>SUBCELLULAR LOCATION</scope>
    <scope>INDUCTION</scope>
    <source>
        <strain>DSM 26</strain>
    </source>
</reference>
<sequence>MNKSTLNNPVFYVSAFVVFLLVIIGATLPNRFGAVAEKLFHFTTIHFGWFYLLAVFVFVVFLITLSLSKFGKIKLGATLTKPEYSFFTWIGMLFSAGFGAGLVFWGVAEPMSHFFKTPFPAVEAMSEEAARVAMGYAFFHWGVSQWSVFAIVGLVIAYLQFRKKRRGLISTSIQPIIGKNKFIADTVDSLAVIATVMGVATSLGLGILQMNGGLKSVFDVPTSIWVQMAIAGVMLITYLISSSTGLDRGIKWLSNINLGSLFIIIVFVFMAGPTVFILNTFVLGLGDYFSNFIGYSLRLTPYTGDTWVREWTIFYWAWSTAWSPFVGAFIARVSRGRSIRQYVLGVLVVSPAIACIWIAAFGGTAVYNDLMNGTSIAEAVNADIAVALFETYQHLPMTTILSILSIFLIFTFLVTSADSATYILGVMTSRGSLNPTLVTKIVWGLLITAIAVVLLLAGGLEALQTASLISALPFTVILLLMMASFTRMLSKGEKKAEQDKE</sequence>
<evidence type="ECO:0000255" key="1"/>
<evidence type="ECO:0000269" key="2">
    <source>
    </source>
</evidence>
<evidence type="ECO:0000303" key="3">
    <source>
    </source>
</evidence>
<evidence type="ECO:0000305" key="4"/>
<evidence type="ECO:0000305" key="5">
    <source>
    </source>
</evidence>
<organism>
    <name type="scientific">Virgibacillus pantothenticus</name>
    <dbReference type="NCBI Taxonomy" id="1473"/>
    <lineage>
        <taxon>Bacteria</taxon>
        <taxon>Bacillati</taxon>
        <taxon>Bacillota</taxon>
        <taxon>Bacilli</taxon>
        <taxon>Bacillales</taxon>
        <taxon>Bacillaceae</taxon>
        <taxon>Virgibacillus</taxon>
    </lineage>
</organism>
<keyword id="KW-0997">Cell inner membrane</keyword>
<keyword id="KW-1003">Cell membrane</keyword>
<keyword id="KW-0472">Membrane</keyword>
<keyword id="KW-0346">Stress response</keyword>
<keyword id="KW-0812">Transmembrane</keyword>
<keyword id="KW-1133">Transmembrane helix</keyword>
<keyword id="KW-0813">Transport</keyword>
<comment type="function">
    <text evidence="2">Mediates the import of ectoine and hydroxyectoine, which function as osmotic and cold stress protectants. Also has minor uptake activities for the compatible solutes proline and glycine betaine.</text>
</comment>
<comment type="biophysicochemical properties">
    <kinetics>
        <KM evidence="2">44 uM for ectoine</KM>
        <Vmax evidence="2">169.0 nmol/min/mg enzyme with ectoine as substrate</Vmax>
    </kinetics>
</comment>
<comment type="subcellular location">
    <subcellularLocation>
        <location evidence="5">Cell inner membrane</location>
        <topology evidence="1">Multi-pass membrane protein</topology>
    </subcellularLocation>
</comment>
<comment type="induction">
    <text evidence="2">Induced by high salinity and cold stress. Induction is mediated by SigB, the master regulator of the general stress response.</text>
</comment>
<comment type="similarity">
    <text evidence="4">Belongs to the BCCT transporter (TC 2.A.15) family.</text>
</comment>
<dbReference type="EMBL" id="AF421189">
    <property type="protein sequence ID" value="AAL16076.1"/>
    <property type="molecule type" value="Genomic_DNA"/>
</dbReference>
<dbReference type="SMR" id="Q93AK1"/>
<dbReference type="TCDB" id="2.A.15.1.8">
    <property type="family name" value="the betaine/carnitine/choline transporter (bcct) family"/>
</dbReference>
<dbReference type="GO" id="GO:0005886">
    <property type="term" value="C:plasma membrane"/>
    <property type="evidence" value="ECO:0007669"/>
    <property type="project" value="UniProtKB-SubCell"/>
</dbReference>
<dbReference type="GO" id="GO:0022857">
    <property type="term" value="F:transmembrane transporter activity"/>
    <property type="evidence" value="ECO:0007669"/>
    <property type="project" value="InterPro"/>
</dbReference>
<dbReference type="InterPro" id="IPR000060">
    <property type="entry name" value="BCCT_transptr"/>
</dbReference>
<dbReference type="NCBIfam" id="TIGR00842">
    <property type="entry name" value="bcct"/>
    <property type="match status" value="1"/>
</dbReference>
<dbReference type="PANTHER" id="PTHR30047:SF7">
    <property type="entry name" value="HIGH-AFFINITY CHOLINE TRANSPORT PROTEIN"/>
    <property type="match status" value="1"/>
</dbReference>
<dbReference type="PANTHER" id="PTHR30047">
    <property type="entry name" value="HIGH-AFFINITY CHOLINE TRANSPORT PROTEIN-RELATED"/>
    <property type="match status" value="1"/>
</dbReference>
<dbReference type="Pfam" id="PF02028">
    <property type="entry name" value="BCCT"/>
    <property type="match status" value="1"/>
</dbReference>
<gene>
    <name evidence="3" type="primary">ectT</name>
</gene>
<name>ECTT_VIRPA</name>
<accession>Q93AK1</accession>
<feature type="chain" id="PRO_0000435358" description="Ectoine/hydroxyectoine transporter">
    <location>
        <begin position="1"/>
        <end position="501"/>
    </location>
</feature>
<feature type="transmembrane region" description="Helical" evidence="1">
    <location>
        <begin position="9"/>
        <end position="29"/>
    </location>
</feature>
<feature type="transmembrane region" description="Helical" evidence="1">
    <location>
        <begin position="45"/>
        <end position="65"/>
    </location>
</feature>
<feature type="transmembrane region" description="Helical" evidence="1">
    <location>
        <begin position="86"/>
        <end position="106"/>
    </location>
</feature>
<feature type="transmembrane region" description="Helical" evidence="1">
    <location>
        <begin position="137"/>
        <end position="157"/>
    </location>
</feature>
<feature type="transmembrane region" description="Helical" evidence="1">
    <location>
        <begin position="190"/>
        <end position="210"/>
    </location>
</feature>
<feature type="transmembrane region" description="Helical" evidence="1">
    <location>
        <begin position="220"/>
        <end position="240"/>
    </location>
</feature>
<feature type="transmembrane region" description="Helical" evidence="1">
    <location>
        <begin position="258"/>
        <end position="278"/>
    </location>
</feature>
<feature type="transmembrane region" description="Helical" evidence="1">
    <location>
        <begin position="311"/>
        <end position="331"/>
    </location>
</feature>
<feature type="transmembrane region" description="Helical" evidence="1">
    <location>
        <begin position="343"/>
        <end position="363"/>
    </location>
</feature>
<feature type="transmembrane region" description="Helical" evidence="1">
    <location>
        <begin position="395"/>
        <end position="415"/>
    </location>
</feature>
<feature type="transmembrane region" description="Helical" evidence="1">
    <location>
        <begin position="441"/>
        <end position="461"/>
    </location>
</feature>
<feature type="transmembrane region" description="Helical" evidence="1">
    <location>
        <begin position="465"/>
        <end position="485"/>
    </location>
</feature>